<gene>
    <name evidence="1" type="primary">gsiD</name>
    <name type="ordered locus">SSON_0814</name>
</gene>
<name>GSID_SHISS</name>
<sequence>MRLFNWRRQAVLNAMPLVKPDQVRTPWHEFWRRFRRQHMAMTAALFVILLIVVAIFARWIAPYDAENYFDYDNLNNGPSLQHWFGVDSLGRDIFSRVLVGAQISLAAGVFAVFIGAAIGTLLGLLAGYYEGWWDRLIMRICDVLFAFPGILLAIAVVAVLGSGIANVIIAVAIFSIPAFARLVRGNTLVLKQQTFIESARSIGASDMTILLRHILPGTVSSIVVFFTMRIGTSIISAASLSFLGLGAQPPTPEWGAMLNEARADMVIAPHVAVFPALAIFLTVLAFNLLGDGLRDALDPKIKG</sequence>
<organism>
    <name type="scientific">Shigella sonnei (strain Ss046)</name>
    <dbReference type="NCBI Taxonomy" id="300269"/>
    <lineage>
        <taxon>Bacteria</taxon>
        <taxon>Pseudomonadati</taxon>
        <taxon>Pseudomonadota</taxon>
        <taxon>Gammaproteobacteria</taxon>
        <taxon>Enterobacterales</taxon>
        <taxon>Enterobacteriaceae</taxon>
        <taxon>Shigella</taxon>
    </lineage>
</organism>
<evidence type="ECO:0000250" key="1">
    <source>
        <dbReference type="UniProtKB" id="P75799"/>
    </source>
</evidence>
<evidence type="ECO:0000255" key="2"/>
<evidence type="ECO:0000255" key="3">
    <source>
        <dbReference type="PROSITE-ProRule" id="PRU00441"/>
    </source>
</evidence>
<evidence type="ECO:0000305" key="4"/>
<protein>
    <recommendedName>
        <fullName evidence="1">Glutathione transport system permease protein GsiD</fullName>
    </recommendedName>
</protein>
<comment type="function">
    <text evidence="1">Part of the ABC transporter complex GsiABCD involved in glutathione import. Probably responsible for the translocation of the substrate across the membrane.</text>
</comment>
<comment type="subunit">
    <text evidence="1">The complex is composed of two ATP-binding proteins (GsiA), two transmembrane proteins (GsiC and GsiD) and a solute-binding protein (GsiB).</text>
</comment>
<comment type="subcellular location">
    <subcellularLocation>
        <location evidence="1">Cell inner membrane</location>
        <topology evidence="2">Multi-pass membrane protein</topology>
    </subcellularLocation>
</comment>
<comment type="similarity">
    <text evidence="4">Belongs to the binding-protein-dependent transport system permease family.</text>
</comment>
<accession>Q3Z3V1</accession>
<feature type="chain" id="PRO_0000280016" description="Glutathione transport system permease protein GsiD">
    <location>
        <begin position="1"/>
        <end position="303"/>
    </location>
</feature>
<feature type="transmembrane region" description="Helical" evidence="3">
    <location>
        <begin position="40"/>
        <end position="60"/>
    </location>
</feature>
<feature type="transmembrane region" description="Helical" evidence="3">
    <location>
        <begin position="105"/>
        <end position="125"/>
    </location>
</feature>
<feature type="transmembrane region" description="Helical" evidence="3">
    <location>
        <begin position="144"/>
        <end position="164"/>
    </location>
</feature>
<feature type="transmembrane region" description="Helical" evidence="3">
    <location>
        <begin position="165"/>
        <end position="185"/>
    </location>
</feature>
<feature type="transmembrane region" description="Helical" evidence="3">
    <location>
        <begin position="222"/>
        <end position="242"/>
    </location>
</feature>
<feature type="transmembrane region" description="Helical" evidence="3">
    <location>
        <begin position="266"/>
        <end position="286"/>
    </location>
</feature>
<feature type="domain" description="ABC transmembrane type-1" evidence="3">
    <location>
        <begin position="101"/>
        <end position="290"/>
    </location>
</feature>
<keyword id="KW-0997">Cell inner membrane</keyword>
<keyword id="KW-1003">Cell membrane</keyword>
<keyword id="KW-0472">Membrane</keyword>
<keyword id="KW-1185">Reference proteome</keyword>
<keyword id="KW-0812">Transmembrane</keyword>
<keyword id="KW-1133">Transmembrane helix</keyword>
<keyword id="KW-0813">Transport</keyword>
<reference key="1">
    <citation type="journal article" date="2005" name="Nucleic Acids Res.">
        <title>Genome dynamics and diversity of Shigella species, the etiologic agents of bacillary dysentery.</title>
        <authorList>
            <person name="Yang F."/>
            <person name="Yang J."/>
            <person name="Zhang X."/>
            <person name="Chen L."/>
            <person name="Jiang Y."/>
            <person name="Yan Y."/>
            <person name="Tang X."/>
            <person name="Wang J."/>
            <person name="Xiong Z."/>
            <person name="Dong J."/>
            <person name="Xue Y."/>
            <person name="Zhu Y."/>
            <person name="Xu X."/>
            <person name="Sun L."/>
            <person name="Chen S."/>
            <person name="Nie H."/>
            <person name="Peng J."/>
            <person name="Xu J."/>
            <person name="Wang Y."/>
            <person name="Yuan Z."/>
            <person name="Wen Y."/>
            <person name="Yao Z."/>
            <person name="Shen Y."/>
            <person name="Qiang B."/>
            <person name="Hou Y."/>
            <person name="Yu J."/>
            <person name="Jin Q."/>
        </authorList>
    </citation>
    <scope>NUCLEOTIDE SEQUENCE [LARGE SCALE GENOMIC DNA]</scope>
    <source>
        <strain>Ss046</strain>
    </source>
</reference>
<dbReference type="EMBL" id="CP000038">
    <property type="protein sequence ID" value="AAZ87561.1"/>
    <property type="molecule type" value="Genomic_DNA"/>
</dbReference>
<dbReference type="RefSeq" id="WP_001236044.1">
    <property type="nucleotide sequence ID" value="NC_007384.1"/>
</dbReference>
<dbReference type="SMR" id="Q3Z3V1"/>
<dbReference type="GeneID" id="93776592"/>
<dbReference type="KEGG" id="ssn:SSON_0814"/>
<dbReference type="HOGENOM" id="CLU_028518_1_1_6"/>
<dbReference type="Proteomes" id="UP000002529">
    <property type="component" value="Chromosome"/>
</dbReference>
<dbReference type="GO" id="GO:0005886">
    <property type="term" value="C:plasma membrane"/>
    <property type="evidence" value="ECO:0007669"/>
    <property type="project" value="UniProtKB-SubCell"/>
</dbReference>
<dbReference type="GO" id="GO:0071916">
    <property type="term" value="F:dipeptide transmembrane transporter activity"/>
    <property type="evidence" value="ECO:0007669"/>
    <property type="project" value="TreeGrafter"/>
</dbReference>
<dbReference type="CDD" id="cd06261">
    <property type="entry name" value="TM_PBP2"/>
    <property type="match status" value="1"/>
</dbReference>
<dbReference type="FunFam" id="1.10.3720.10:FF:000022">
    <property type="entry name" value="Glutathione ABC transporter permease GsiD"/>
    <property type="match status" value="1"/>
</dbReference>
<dbReference type="Gene3D" id="1.10.3720.10">
    <property type="entry name" value="MetI-like"/>
    <property type="match status" value="1"/>
</dbReference>
<dbReference type="InterPro" id="IPR050366">
    <property type="entry name" value="BP-dependent_transpt_permease"/>
</dbReference>
<dbReference type="InterPro" id="IPR000515">
    <property type="entry name" value="MetI-like"/>
</dbReference>
<dbReference type="InterPro" id="IPR035906">
    <property type="entry name" value="MetI-like_sf"/>
</dbReference>
<dbReference type="InterPro" id="IPR025966">
    <property type="entry name" value="OppC_N"/>
</dbReference>
<dbReference type="NCBIfam" id="NF011662">
    <property type="entry name" value="PRK15082.1"/>
    <property type="match status" value="1"/>
</dbReference>
<dbReference type="PANTHER" id="PTHR43386:SF3">
    <property type="entry name" value="GLUTATHIONE TRANSPORT SYSTEM PERMEASE PROTEIN GSID"/>
    <property type="match status" value="1"/>
</dbReference>
<dbReference type="PANTHER" id="PTHR43386">
    <property type="entry name" value="OLIGOPEPTIDE TRANSPORT SYSTEM PERMEASE PROTEIN APPC"/>
    <property type="match status" value="1"/>
</dbReference>
<dbReference type="Pfam" id="PF00528">
    <property type="entry name" value="BPD_transp_1"/>
    <property type="match status" value="1"/>
</dbReference>
<dbReference type="Pfam" id="PF12911">
    <property type="entry name" value="OppC_N"/>
    <property type="match status" value="1"/>
</dbReference>
<dbReference type="SUPFAM" id="SSF161098">
    <property type="entry name" value="MetI-like"/>
    <property type="match status" value="1"/>
</dbReference>
<dbReference type="PROSITE" id="PS50928">
    <property type="entry name" value="ABC_TM1"/>
    <property type="match status" value="1"/>
</dbReference>
<proteinExistence type="inferred from homology"/>